<reference key="1">
    <citation type="journal article" date="1985" name="Cell">
        <title>tnpM: a novel regulatory gene that enhances Tn21 transposition and suppresses cointegrate resolution.</title>
        <authorList>
            <person name="Hyde D.R."/>
            <person name="Tu C.-P.T."/>
        </authorList>
    </citation>
    <scope>NUCLEOTIDE SEQUENCE [GENOMIC DNA]</scope>
</reference>
<reference key="2">
    <citation type="journal article" date="1983" name="Mol. Gen. Genet.">
        <title>DNA sequences of and complementation by the tnpR genes of Tn21, Tn501 and Tn1721.</title>
        <authorList>
            <person name="Diver W.P."/>
            <person name="Grinsted J."/>
            <person name="Fritzinger D.C."/>
            <person name="Brown N.L."/>
            <person name="Altenbuchner J."/>
            <person name="Rogowsky P."/>
            <person name="Schmitt R."/>
        </authorList>
    </citation>
    <scope>NUCLEOTIDE SEQUENCE [GENOMIC DNA]</scope>
</reference>
<reference key="3">
    <citation type="journal article" date="1987" name="Nucleic Acids Res.">
        <title>The nucleotide sequence of the tnpA gene of Tn21.</title>
        <authorList>
            <person name="Ward E."/>
            <person name="Grinsted J."/>
        </authorList>
    </citation>
    <scope>NUCLEOTIDE SEQUENCE [GENOMIC DNA] OF 170-186</scope>
</reference>
<evidence type="ECO:0000255" key="1"/>
<evidence type="ECO:0000255" key="2">
    <source>
        <dbReference type="PROSITE-ProRule" id="PRU01072"/>
    </source>
</evidence>
<evidence type="ECO:0000305" key="3"/>
<dbReference type="EMBL" id="X01298">
    <property type="protein sequence ID" value="CAA25626.1"/>
    <property type="molecule type" value="Genomic_DNA"/>
</dbReference>
<dbReference type="EMBL" id="M10791">
    <property type="protein sequence ID" value="AAA27421.1"/>
    <property type="molecule type" value="Genomic_DNA"/>
</dbReference>
<dbReference type="EMBL" id="X04891">
    <property type="protein sequence ID" value="CAA28578.1"/>
    <property type="molecule type" value="Genomic_DNA"/>
</dbReference>
<dbReference type="PIR" id="A03543">
    <property type="entry name" value="RPEC21"/>
</dbReference>
<dbReference type="RefSeq" id="WP_000147567.1">
    <property type="nucleotide sequence ID" value="NZ_WVVM01000039.1"/>
</dbReference>
<dbReference type="RefSeq" id="YP_001096360.1">
    <property type="nucleotide sequence ID" value="NC_009132.1"/>
</dbReference>
<dbReference type="RefSeq" id="YP_001096416.1">
    <property type="nucleotide sequence ID" value="NC_009133.1"/>
</dbReference>
<dbReference type="RefSeq" id="YP_001816594.1">
    <property type="nucleotide sequence ID" value="NC_010558.1"/>
</dbReference>
<dbReference type="RefSeq" id="YP_006903512.1">
    <property type="nucleotide sequence ID" value="NC_019043.1"/>
</dbReference>
<dbReference type="RefSeq" id="YP_006953996.1">
    <property type="nucleotide sequence ID" value="NC_019091.1"/>
</dbReference>
<dbReference type="RefSeq" id="YP_008864012.1">
    <property type="nucleotide sequence ID" value="NC_022992.1"/>
</dbReference>
<dbReference type="RefSeq" id="YP_008864679.1">
    <property type="nucleotide sequence ID" value="NC_022996.1"/>
</dbReference>
<dbReference type="RefSeq" id="YP_008995269.1">
    <property type="nucleotide sequence ID" value="NC_023277.2"/>
</dbReference>
<dbReference type="RefSeq" id="YP_008997427.1">
    <property type="nucleotide sequence ID" value="NC_023289.2"/>
</dbReference>
<dbReference type="RefSeq" id="YP_009060119.1">
    <property type="nucleotide sequence ID" value="NC_024956.1"/>
</dbReference>
<dbReference type="RefSeq" id="YP_009061091.1">
    <property type="nucleotide sequence ID" value="NC_024975.1"/>
</dbReference>
<dbReference type="RefSeq" id="YP_009071096.1">
    <property type="nucleotide sequence ID" value="NC_025179.1"/>
</dbReference>
<dbReference type="SMR" id="P04130"/>
<dbReference type="OMA" id="QRQMEGI"/>
<dbReference type="GO" id="GO:0003677">
    <property type="term" value="F:DNA binding"/>
    <property type="evidence" value="ECO:0007669"/>
    <property type="project" value="UniProtKB-KW"/>
</dbReference>
<dbReference type="GO" id="GO:0000150">
    <property type="term" value="F:DNA strand exchange activity"/>
    <property type="evidence" value="ECO:0007669"/>
    <property type="project" value="InterPro"/>
</dbReference>
<dbReference type="GO" id="GO:0015074">
    <property type="term" value="P:DNA integration"/>
    <property type="evidence" value="ECO:0007669"/>
    <property type="project" value="UniProtKB-KW"/>
</dbReference>
<dbReference type="CDD" id="cd00569">
    <property type="entry name" value="HTH_Hin_like"/>
    <property type="match status" value="1"/>
</dbReference>
<dbReference type="CDD" id="cd03768">
    <property type="entry name" value="SR_ResInv"/>
    <property type="match status" value="1"/>
</dbReference>
<dbReference type="Gene3D" id="1.10.10.60">
    <property type="entry name" value="Homeodomain-like"/>
    <property type="match status" value="1"/>
</dbReference>
<dbReference type="Gene3D" id="3.40.50.1390">
    <property type="entry name" value="Resolvase, N-terminal catalytic domain"/>
    <property type="match status" value="1"/>
</dbReference>
<dbReference type="InterPro" id="IPR009057">
    <property type="entry name" value="Homeodomain-like_sf"/>
</dbReference>
<dbReference type="InterPro" id="IPR006118">
    <property type="entry name" value="Recombinase_CS"/>
</dbReference>
<dbReference type="InterPro" id="IPR006119">
    <property type="entry name" value="Resolv_N"/>
</dbReference>
<dbReference type="InterPro" id="IPR036162">
    <property type="entry name" value="Resolvase-like_N_sf"/>
</dbReference>
<dbReference type="InterPro" id="IPR006120">
    <property type="entry name" value="Resolvase_HTH_dom"/>
</dbReference>
<dbReference type="InterPro" id="IPR050639">
    <property type="entry name" value="SSR_resolvase"/>
</dbReference>
<dbReference type="PANTHER" id="PTHR30461">
    <property type="entry name" value="DNA-INVERTASE FROM LAMBDOID PROPHAGE"/>
    <property type="match status" value="1"/>
</dbReference>
<dbReference type="PANTHER" id="PTHR30461:SF26">
    <property type="entry name" value="RESOLVASE HOMOLOG YNEB"/>
    <property type="match status" value="1"/>
</dbReference>
<dbReference type="Pfam" id="PF02796">
    <property type="entry name" value="HTH_7"/>
    <property type="match status" value="1"/>
</dbReference>
<dbReference type="Pfam" id="PF00239">
    <property type="entry name" value="Resolvase"/>
    <property type="match status" value="1"/>
</dbReference>
<dbReference type="SMART" id="SM00857">
    <property type="entry name" value="Resolvase"/>
    <property type="match status" value="1"/>
</dbReference>
<dbReference type="SUPFAM" id="SSF46689">
    <property type="entry name" value="Homeodomain-like"/>
    <property type="match status" value="1"/>
</dbReference>
<dbReference type="SUPFAM" id="SSF53041">
    <property type="entry name" value="Resolvase-like"/>
    <property type="match status" value="1"/>
</dbReference>
<dbReference type="PROSITE" id="PS00397">
    <property type="entry name" value="RECOMBINASES_1"/>
    <property type="match status" value="1"/>
</dbReference>
<dbReference type="PROSITE" id="PS00398">
    <property type="entry name" value="RECOMBINASES_2"/>
    <property type="match status" value="1"/>
</dbReference>
<dbReference type="PROSITE" id="PS51736">
    <property type="entry name" value="RECOMBINASES_3"/>
    <property type="match status" value="1"/>
</dbReference>
<feature type="chain" id="PRO_0000196372" description="Transposon Tn21 resolvase">
    <location>
        <begin position="1"/>
        <end position="186"/>
    </location>
</feature>
<feature type="domain" description="Resolvase/invertase-type recombinase catalytic" evidence="2">
    <location>
        <begin position="4"/>
        <end position="137"/>
    </location>
</feature>
<feature type="DNA-binding region" description="H-T-H motif" evidence="1">
    <location>
        <begin position="164"/>
        <end position="183"/>
    </location>
</feature>
<feature type="active site" description="O-(5'-phospho-DNA)-serine intermediate" evidence="2">
    <location>
        <position position="12"/>
    </location>
</feature>
<accession>P04130</accession>
<protein>
    <recommendedName>
        <fullName>Transposon Tn21 resolvase</fullName>
    </recommendedName>
</protein>
<name>TNR2_ECOLX</name>
<keyword id="KW-0229">DNA integration</keyword>
<keyword id="KW-0233">DNA recombination</keyword>
<keyword id="KW-0238">DNA-binding</keyword>
<keyword id="KW-0814">Transposable element</keyword>
<proteinExistence type="inferred from homology"/>
<gene>
    <name type="primary">tnpR</name>
</gene>
<organism>
    <name type="scientific">Escherichia coli</name>
    <dbReference type="NCBI Taxonomy" id="562"/>
    <lineage>
        <taxon>Bacteria</taxon>
        <taxon>Pseudomonadati</taxon>
        <taxon>Pseudomonadota</taxon>
        <taxon>Gammaproteobacteria</taxon>
        <taxon>Enterobacterales</taxon>
        <taxon>Enterobacteriaceae</taxon>
        <taxon>Escherichia</taxon>
    </lineage>
</organism>
<comment type="function">
    <text>Resolvase catalyzes the resolution (a site-specific recombination) of the cointegrated replicon to yield the final transposition products.</text>
</comment>
<comment type="miscellaneous">
    <text>Tn21 is a transposon encoding resistance to sulfonamide, streptomycin, and mercuric ion.</text>
</comment>
<comment type="similarity">
    <text evidence="3">Belongs to the site-specific recombinase resolvase family.</text>
</comment>
<sequence length="186" mass="21329">MTGQRIGYIRVSTFDQNPERQLEGVKVDRAFSDKASGKDVKRPQLEALISFARTGDTVVVHSMDRLARNLDDLRRIVQTLTQRGVHIEFVKEHLSFTGEDSPMANLMLSVMGAFAEFERALIRERQREGIALAKQRGAYRGRKKSLSSERIAELRQRVEAGEQKTKLAREFGISRETLYQYLRTDQ</sequence>